<dbReference type="EC" id="6.3.5.3" evidence="1"/>
<dbReference type="EC" id="3.5.1.2" evidence="1"/>
<dbReference type="EMBL" id="AE000516">
    <property type="protein sequence ID" value="AAK45055.1"/>
    <property type="molecule type" value="Genomic_DNA"/>
</dbReference>
<dbReference type="PIR" id="G70709">
    <property type="entry name" value="G70709"/>
</dbReference>
<dbReference type="RefSeq" id="WP_003403995.1">
    <property type="nucleotide sequence ID" value="NZ_KK341227.1"/>
</dbReference>
<dbReference type="SMR" id="P9WHL4"/>
<dbReference type="KEGG" id="mtc:MT0813"/>
<dbReference type="PATRIC" id="fig|83331.31.peg.873"/>
<dbReference type="HOGENOM" id="CLU_001031_3_1_11"/>
<dbReference type="UniPathway" id="UPA00074">
    <property type="reaction ID" value="UER00128"/>
</dbReference>
<dbReference type="Proteomes" id="UP000001020">
    <property type="component" value="Chromosome"/>
</dbReference>
<dbReference type="GO" id="GO:0005737">
    <property type="term" value="C:cytoplasm"/>
    <property type="evidence" value="ECO:0007669"/>
    <property type="project" value="UniProtKB-SubCell"/>
</dbReference>
<dbReference type="GO" id="GO:0005524">
    <property type="term" value="F:ATP binding"/>
    <property type="evidence" value="ECO:0007669"/>
    <property type="project" value="UniProtKB-KW"/>
</dbReference>
<dbReference type="GO" id="GO:0004359">
    <property type="term" value="F:glutaminase activity"/>
    <property type="evidence" value="ECO:0007669"/>
    <property type="project" value="UniProtKB-EC"/>
</dbReference>
<dbReference type="GO" id="GO:0004642">
    <property type="term" value="F:phosphoribosylformylglycinamidine synthase activity"/>
    <property type="evidence" value="ECO:0007669"/>
    <property type="project" value="UniProtKB-UniRule"/>
</dbReference>
<dbReference type="GO" id="GO:0006189">
    <property type="term" value="P:'de novo' IMP biosynthetic process"/>
    <property type="evidence" value="ECO:0007669"/>
    <property type="project" value="UniProtKB-UniRule"/>
</dbReference>
<dbReference type="CDD" id="cd01740">
    <property type="entry name" value="GATase1_FGAR_AT"/>
    <property type="match status" value="1"/>
</dbReference>
<dbReference type="FunFam" id="3.40.50.880:FF:000019">
    <property type="entry name" value="Phosphoribosylformylglycinamidine synthase subunit PurQ"/>
    <property type="match status" value="1"/>
</dbReference>
<dbReference type="Gene3D" id="3.40.50.880">
    <property type="match status" value="1"/>
</dbReference>
<dbReference type="HAMAP" id="MF_00421">
    <property type="entry name" value="PurQ"/>
    <property type="match status" value="1"/>
</dbReference>
<dbReference type="InterPro" id="IPR029062">
    <property type="entry name" value="Class_I_gatase-like"/>
</dbReference>
<dbReference type="InterPro" id="IPR010075">
    <property type="entry name" value="PRibForGlyAmidine_synth_PurQ"/>
</dbReference>
<dbReference type="NCBIfam" id="TIGR01737">
    <property type="entry name" value="FGAM_synth_I"/>
    <property type="match status" value="1"/>
</dbReference>
<dbReference type="NCBIfam" id="NF002957">
    <property type="entry name" value="PRK03619.1"/>
    <property type="match status" value="1"/>
</dbReference>
<dbReference type="PANTHER" id="PTHR47552">
    <property type="entry name" value="PHOSPHORIBOSYLFORMYLGLYCINAMIDINE SYNTHASE SUBUNIT PURQ"/>
    <property type="match status" value="1"/>
</dbReference>
<dbReference type="PANTHER" id="PTHR47552:SF1">
    <property type="entry name" value="PHOSPHORIBOSYLFORMYLGLYCINAMIDINE SYNTHASE SUBUNIT PURQ"/>
    <property type="match status" value="1"/>
</dbReference>
<dbReference type="Pfam" id="PF13507">
    <property type="entry name" value="GATase_5"/>
    <property type="match status" value="1"/>
</dbReference>
<dbReference type="PIRSF" id="PIRSF001586">
    <property type="entry name" value="FGAM_synth_I"/>
    <property type="match status" value="1"/>
</dbReference>
<dbReference type="SMART" id="SM01211">
    <property type="entry name" value="GATase_5"/>
    <property type="match status" value="1"/>
</dbReference>
<dbReference type="SUPFAM" id="SSF52317">
    <property type="entry name" value="Class I glutamine amidotransferase-like"/>
    <property type="match status" value="1"/>
</dbReference>
<dbReference type="PROSITE" id="PS51273">
    <property type="entry name" value="GATASE_TYPE_1"/>
    <property type="match status" value="1"/>
</dbReference>
<keyword id="KW-0067">ATP-binding</keyword>
<keyword id="KW-0963">Cytoplasm</keyword>
<keyword id="KW-0315">Glutamine amidotransferase</keyword>
<keyword id="KW-0378">Hydrolase</keyword>
<keyword id="KW-0436">Ligase</keyword>
<keyword id="KW-0547">Nucleotide-binding</keyword>
<keyword id="KW-0658">Purine biosynthesis</keyword>
<keyword id="KW-1185">Reference proteome</keyword>
<comment type="function">
    <text evidence="1">Part of the phosphoribosylformylglycinamidine synthase complex involved in the purines biosynthetic pathway. Catalyzes the ATP-dependent conversion of formylglycinamide ribonucleotide (FGAR) and glutamine to yield formylglycinamidine ribonucleotide (FGAM) and glutamate. The FGAM synthase complex is composed of three subunits. PurQ produces an ammonia molecule by converting glutamine to glutamate. PurL transfers the ammonia molecule to FGAR to form FGAM in an ATP-dependent manner. PurS interacts with PurQ and PurL and is thought to assist in the transfer of the ammonia molecule from PurQ to PurL.</text>
</comment>
<comment type="catalytic activity">
    <reaction evidence="1">
        <text>N(2)-formyl-N(1)-(5-phospho-beta-D-ribosyl)glycinamide + L-glutamine + ATP + H2O = 2-formamido-N(1)-(5-O-phospho-beta-D-ribosyl)acetamidine + L-glutamate + ADP + phosphate + H(+)</text>
        <dbReference type="Rhea" id="RHEA:17129"/>
        <dbReference type="ChEBI" id="CHEBI:15377"/>
        <dbReference type="ChEBI" id="CHEBI:15378"/>
        <dbReference type="ChEBI" id="CHEBI:29985"/>
        <dbReference type="ChEBI" id="CHEBI:30616"/>
        <dbReference type="ChEBI" id="CHEBI:43474"/>
        <dbReference type="ChEBI" id="CHEBI:58359"/>
        <dbReference type="ChEBI" id="CHEBI:147286"/>
        <dbReference type="ChEBI" id="CHEBI:147287"/>
        <dbReference type="ChEBI" id="CHEBI:456216"/>
        <dbReference type="EC" id="6.3.5.3"/>
    </reaction>
</comment>
<comment type="catalytic activity">
    <reaction evidence="1">
        <text>L-glutamine + H2O = L-glutamate + NH4(+)</text>
        <dbReference type="Rhea" id="RHEA:15889"/>
        <dbReference type="ChEBI" id="CHEBI:15377"/>
        <dbReference type="ChEBI" id="CHEBI:28938"/>
        <dbReference type="ChEBI" id="CHEBI:29985"/>
        <dbReference type="ChEBI" id="CHEBI:58359"/>
        <dbReference type="EC" id="3.5.1.2"/>
    </reaction>
</comment>
<comment type="pathway">
    <text evidence="1">Purine metabolism; IMP biosynthesis via de novo pathway; 5-amino-1-(5-phospho-D-ribosyl)imidazole from N(2)-formyl-N(1)-(5-phospho-D-ribosyl)glycinamide: step 1/2.</text>
</comment>
<comment type="subunit">
    <text evidence="1">Part of the FGAM synthase complex composed of 1 PurL, 1 PurQ and 2 PurS subunits.</text>
</comment>
<comment type="subcellular location">
    <subcellularLocation>
        <location evidence="1">Cytoplasm</location>
    </subcellularLocation>
</comment>
<name>PURQ_MYCTO</name>
<gene>
    <name evidence="1" type="primary">purQ</name>
    <name type="ordered locus">MT0813</name>
</gene>
<accession>P9WHL4</accession>
<accession>L0T4W8</accession>
<accession>P65902</accession>
<accession>P71841</accession>
<evidence type="ECO:0000255" key="1">
    <source>
        <dbReference type="HAMAP-Rule" id="MF_00421"/>
    </source>
</evidence>
<sequence>MTARIGVVTFPGTLDDVDAARAARQVGAEVVSLWHADADLKGVDAVVVPGGFSYGDYLRAGAIARFAPVMDEVVAAADRGMPVLGICNGFQVLCEAGLLPGALTRNVGLHFICRDVWLRVASTSTAWTSRFEPDADLLVPLKSGEGRYVAPEKVLDELEGEGRVVFRYHDNVNGSLRDIAGICSANGRVVGLMPHPEHAIEALTGPSDDGLGLFYSALDAVLTG</sequence>
<organism>
    <name type="scientific">Mycobacterium tuberculosis (strain CDC 1551 / Oshkosh)</name>
    <dbReference type="NCBI Taxonomy" id="83331"/>
    <lineage>
        <taxon>Bacteria</taxon>
        <taxon>Bacillati</taxon>
        <taxon>Actinomycetota</taxon>
        <taxon>Actinomycetes</taxon>
        <taxon>Mycobacteriales</taxon>
        <taxon>Mycobacteriaceae</taxon>
        <taxon>Mycobacterium</taxon>
        <taxon>Mycobacterium tuberculosis complex</taxon>
    </lineage>
</organism>
<protein>
    <recommendedName>
        <fullName evidence="1">Phosphoribosylformylglycinamidine synthase subunit PurQ</fullName>
        <shortName evidence="1">FGAM synthase</shortName>
        <ecNumber evidence="1">6.3.5.3</ecNumber>
    </recommendedName>
    <alternativeName>
        <fullName evidence="1">Formylglycinamide ribonucleotide amidotransferase subunit I</fullName>
        <shortName evidence="1">FGAR amidotransferase I</shortName>
        <shortName evidence="1">FGAR-AT I</shortName>
    </alternativeName>
    <alternativeName>
        <fullName evidence="1">Glutaminase PurQ</fullName>
        <ecNumber evidence="1">3.5.1.2</ecNumber>
    </alternativeName>
    <alternativeName>
        <fullName evidence="1">Phosphoribosylformylglycinamidine synthase subunit I</fullName>
    </alternativeName>
</protein>
<feature type="chain" id="PRO_0000428164" description="Phosphoribosylformylglycinamidine synthase subunit PurQ">
    <location>
        <begin position="1"/>
        <end position="224"/>
    </location>
</feature>
<feature type="domain" description="Glutamine amidotransferase type-1" evidence="1">
    <location>
        <begin position="4"/>
        <end position="224"/>
    </location>
</feature>
<feature type="active site" description="Nucleophile" evidence="1">
    <location>
        <position position="87"/>
    </location>
</feature>
<feature type="active site" evidence="1">
    <location>
        <position position="195"/>
    </location>
</feature>
<feature type="active site" evidence="1">
    <location>
        <position position="197"/>
    </location>
</feature>
<proteinExistence type="inferred from homology"/>
<reference key="1">
    <citation type="journal article" date="2002" name="J. Bacteriol.">
        <title>Whole-genome comparison of Mycobacterium tuberculosis clinical and laboratory strains.</title>
        <authorList>
            <person name="Fleischmann R.D."/>
            <person name="Alland D."/>
            <person name="Eisen J.A."/>
            <person name="Carpenter L."/>
            <person name="White O."/>
            <person name="Peterson J.D."/>
            <person name="DeBoy R.T."/>
            <person name="Dodson R.J."/>
            <person name="Gwinn M.L."/>
            <person name="Haft D.H."/>
            <person name="Hickey E.K."/>
            <person name="Kolonay J.F."/>
            <person name="Nelson W.C."/>
            <person name="Umayam L.A."/>
            <person name="Ermolaeva M.D."/>
            <person name="Salzberg S.L."/>
            <person name="Delcher A."/>
            <person name="Utterback T.R."/>
            <person name="Weidman J.F."/>
            <person name="Khouri H.M."/>
            <person name="Gill J."/>
            <person name="Mikula A."/>
            <person name="Bishai W."/>
            <person name="Jacobs W.R. Jr."/>
            <person name="Venter J.C."/>
            <person name="Fraser C.M."/>
        </authorList>
    </citation>
    <scope>NUCLEOTIDE SEQUENCE [LARGE SCALE GENOMIC DNA]</scope>
    <source>
        <strain>CDC 1551 / Oshkosh</strain>
    </source>
</reference>